<organism>
    <name type="scientific">Saimiri boliviensis boliviensis</name>
    <name type="common">Bolivian squirrel monkey</name>
    <dbReference type="NCBI Taxonomy" id="39432"/>
    <lineage>
        <taxon>Eukaryota</taxon>
        <taxon>Metazoa</taxon>
        <taxon>Chordata</taxon>
        <taxon>Craniata</taxon>
        <taxon>Vertebrata</taxon>
        <taxon>Euteleostomi</taxon>
        <taxon>Mammalia</taxon>
        <taxon>Eutheria</taxon>
        <taxon>Euarchontoglires</taxon>
        <taxon>Primates</taxon>
        <taxon>Haplorrhini</taxon>
        <taxon>Platyrrhini</taxon>
        <taxon>Cebidae</taxon>
        <taxon>Saimiriinae</taxon>
        <taxon>Saimiri</taxon>
    </lineage>
</organism>
<gene>
    <name type="primary">CTTNBP2</name>
    <name type="synonym">CORTBP2</name>
</gene>
<sequence>MATDGASCEPDLSRAPEDAAGAAAEAAKKEFDVDTLSKSELRMLLSVMEGELEARDLVIEALRARRKEVFIQERYGRFNLNDPFLALQRDYEAGAGDKEKKPVCTNPLSILEAVMAHCRKMQERMSAQLAAAESRQKKLEMEKLQLQALEQEHKKLAARLEEERGKNKQVVLMLVKECKQLSGKVIEEAQKLEDVMAKLEEEKKKTNELEEELSAEKQRSTEMEAQMEKQLSEFDTEREQLRAKLNREEAHTTDLKEEIDKMKKMIEQLKRGSDSKPSLSLPRKTKDRRLVSISVGTEGTVTRSVACQTDLVTESADHVKKLPLTMPVKPSTGSPLASANAKGSAAMARPGIDRQTSHGDLIGVSVPAFPPSSANRIEENGPSTGLTPDPTSSTPPLPGNAAPPTAQTPGITPQNSQAPPMHSLHSPCANASLHPGLNPRIQAARFRFQGNANDPDQNGNTTQSPPSRDVSPTSRDNLVAKQLARNTVTQALSRFTGPQAGAPPRPGAPPTGDVSTHHSVGRTGVKTHGVARVDRGNPPPIPPKKPGLSQTPSPPHPQLKVIIDSSRASNTGAKGDNKTVASPPSSLPQGNRVINEENLPKSSSPQLPPKPSIDLTVAPAGCTVSALATSQVGAWPAATPGLNQPACSGSSLAIPTTIAFCSSINPVSASSCRPGASDSLLVTASGWSPSLTPLLMSGGPAPLAGRPTLLQQAAAQGNVTLLLMLLNEEGLDINYSCEDGHSALYSAAKNGHTDCVRLLLSAEAQVNAADKNGFTPLCAAAAQGHFECVELLIAYDANINHAADGGQTPLYLACKNGNKECIKLLLEAGTDRNVKTTDGWTPVHAAVDTGNVDSLKLLMYHRVPAHGNSFSEEESESGVFDLDGGGESPEGKSKPVVTADFINHANREGWTAAHIAASKGFKNCLEILCRHGGLETERRDKCNRTVHDVATDDCKHLLENLNALKIPLRISVGEIEPSNYGSDDFECENTICTLNIRKQTSWDDFSKAVSQALTNHFQAISSDGWWSLEDVTCNNSTDSNIGLSSRSIRSITLGNVPWSVGQSFLQSPWDFMMKNKAEHITVLLSGPQEGCLSSVTYASMIPLQMMQNYLRLVEQYHNVIFHGPEGSLQDYIVRQLALCLKHRQMAAGFSCEIVRAEVDAGFSKKQLLDLFISSACLIPVKQSPVKKKIIIILENLEKSSLSELLRDFLAPLENRSAESPCTFQKGNGMSECYYFHENCFLMGTIAKACLQGSDLLVQQHFRWVQLRWDGEPMQGLLQRFLRRKVVNKFRGQVPPPCDPVCKIVDWALSVWRQLNSCLARLGTPEALLGPKYFLSCPVVPGHAQVTVKWMSKLWNGVITPRVQEAILSRASVKRQPGLGQTTAKRHPSQGQQAVVKAALSILLNKAVLHGCPLPRAELEQHRADFKGGSFPLSIVASYNSCSKKKGESGAWRKVNTSPRRKSGRFSLPTWNKPDLSTEGIKSKTLSQLNCNRNASLSKQKSLENDVSLTLNLDQRLSLGSDDEADLVKELQSMCSSKSESDISKIADSRDDLRMFDSAGNNPVFSAAINNLRMPVSQKEVCPLSSHQTTECSNSKSKTELGVSRVKSFLPVPRSKVTQCSQNTKRNSSSSNTRQIEINNNSKEENWNLHKNEHLEKPNK</sequence>
<reference key="1">
    <citation type="submission" date="2006-09" db="EMBL/GenBank/DDBJ databases">
        <title>NISC comparative sequencing initiative.</title>
        <authorList>
            <person name="Antonellis A."/>
            <person name="Ayele K."/>
            <person name="Benjamin B."/>
            <person name="Blakesley R.W."/>
            <person name="Boakye A."/>
            <person name="Bouffard G.G."/>
            <person name="Brinkley C."/>
            <person name="Brooks S."/>
            <person name="Chu G."/>
            <person name="Coleman H."/>
            <person name="Engle J."/>
            <person name="Gestole M."/>
            <person name="Greene A."/>
            <person name="Guan X."/>
            <person name="Gupta J."/>
            <person name="Haghighi P."/>
            <person name="Han J."/>
            <person name="Hansen N."/>
            <person name="Ho S.-L."/>
            <person name="Hu P."/>
            <person name="Hunter G."/>
            <person name="Hurle B."/>
            <person name="Idol J.R."/>
            <person name="Kwong P."/>
            <person name="Laric P."/>
            <person name="Larson S."/>
            <person name="Lee-Lin S.-Q."/>
            <person name="Legaspi R."/>
            <person name="Madden M."/>
            <person name="Maduro Q.L."/>
            <person name="Maduro V.B."/>
            <person name="Margulies E.H."/>
            <person name="Masiello C."/>
            <person name="Maskeri B."/>
            <person name="McDowell J."/>
            <person name="Mojidi H.A."/>
            <person name="Mullikin J.C."/>
            <person name="Oestreicher J.S."/>
            <person name="Park M."/>
            <person name="Portnoy M.E."/>
            <person name="Prasad A."/>
            <person name="Puri O."/>
            <person name="Reddix-Dugue N."/>
            <person name="Schandler K."/>
            <person name="Schueler M.G."/>
            <person name="Sison C."/>
            <person name="Stantripop S."/>
            <person name="Stephen E."/>
            <person name="Taye A."/>
            <person name="Thomas J.W."/>
            <person name="Thomas P.J."/>
            <person name="Tsipouri V."/>
            <person name="Ung L."/>
            <person name="Vogt J.L."/>
            <person name="Wetherby K.D."/>
            <person name="Young A."/>
            <person name="Green E.D."/>
        </authorList>
    </citation>
    <scope>NUCLEOTIDE SEQUENCE [LARGE SCALE GENOMIC DNA]</scope>
</reference>
<evidence type="ECO:0000250" key="1">
    <source>
        <dbReference type="UniProtKB" id="B9EJA2"/>
    </source>
</evidence>
<evidence type="ECO:0000250" key="2">
    <source>
        <dbReference type="UniProtKB" id="Q2IBD4"/>
    </source>
</evidence>
<evidence type="ECO:0000250" key="3">
    <source>
        <dbReference type="UniProtKB" id="Q8WZ74"/>
    </source>
</evidence>
<evidence type="ECO:0000255" key="4"/>
<evidence type="ECO:0000256" key="5">
    <source>
        <dbReference type="SAM" id="MobiDB-lite"/>
    </source>
</evidence>
<comment type="function">
    <text evidence="2">Regulates the dendritic spine distribution of CTTN/cortactin in hippocampal neurons, and thus controls dendritic spinogenesis and dendritic spine maintenance. Associates with the striatin-interacting phosphatase and kinase (STRIPAK) core complex to regulate dendritic spine distribution of the STRIPAK complex in hippocampal neurons.</text>
</comment>
<comment type="subunit">
    <text evidence="2">Interacts with CTTN/cortactin SH3 domain. Interacts with STRN, STRN4/zinedin and MOB4/phocein; this interactions mediate the association with the STRIPAK core complex and may regulate dendritic spine distribution of the STRIPAK complex in hippocampal neurons. Activation of glutamate receptors weakens the interaction with STRN and STRN4.</text>
</comment>
<comment type="subcellular location">
    <subcellularLocation>
        <location evidence="1">Cytoplasm</location>
        <location evidence="1">Cell cortex</location>
    </subcellularLocation>
    <subcellularLocation>
        <location evidence="2">Cell projection</location>
        <location evidence="2">Dendritic spine</location>
    </subcellularLocation>
    <text evidence="2">Remains associated with dendritic spines even after glutamate stimulation.</text>
</comment>
<name>CTTB2_SAIBB</name>
<feature type="chain" id="PRO_0000260416" description="Cortactin-binding protein 2">
    <location>
        <begin position="1"/>
        <end position="1659"/>
    </location>
</feature>
<feature type="repeat" description="ANK 1">
    <location>
        <begin position="705"/>
        <end position="735"/>
    </location>
</feature>
<feature type="repeat" description="ANK 2">
    <location>
        <begin position="739"/>
        <end position="768"/>
    </location>
</feature>
<feature type="repeat" description="ANK 3">
    <location>
        <begin position="772"/>
        <end position="801"/>
    </location>
</feature>
<feature type="repeat" description="ANK 4">
    <location>
        <begin position="805"/>
        <end position="834"/>
    </location>
</feature>
<feature type="repeat" description="ANK 5">
    <location>
        <begin position="838"/>
        <end position="867"/>
    </location>
</feature>
<feature type="repeat" description="ANK 6">
    <location>
        <begin position="908"/>
        <end position="938"/>
    </location>
</feature>
<feature type="region of interest" description="Disordered" evidence="5">
    <location>
        <begin position="1"/>
        <end position="23"/>
    </location>
</feature>
<feature type="region of interest" description="Disordered" evidence="5">
    <location>
        <begin position="324"/>
        <end position="436"/>
    </location>
</feature>
<feature type="region of interest" description="Disordered" evidence="5">
    <location>
        <begin position="450"/>
        <end position="474"/>
    </location>
</feature>
<feature type="region of interest" description="Disordered" evidence="5">
    <location>
        <begin position="495"/>
        <end position="612"/>
    </location>
</feature>
<feature type="region of interest" description="Disordered" evidence="5">
    <location>
        <begin position="869"/>
        <end position="893"/>
    </location>
</feature>
<feature type="region of interest" description="Disordered" evidence="5">
    <location>
        <begin position="1443"/>
        <end position="1478"/>
    </location>
</feature>
<feature type="region of interest" description="Disordered" evidence="5">
    <location>
        <begin position="1613"/>
        <end position="1659"/>
    </location>
</feature>
<feature type="coiled-coil region" evidence="4">
    <location>
        <begin position="119"/>
        <end position="276"/>
    </location>
</feature>
<feature type="compositionally biased region" description="Low complexity" evidence="5">
    <location>
        <begin position="337"/>
        <end position="348"/>
    </location>
</feature>
<feature type="compositionally biased region" description="Low complexity" evidence="5">
    <location>
        <begin position="381"/>
        <end position="392"/>
    </location>
</feature>
<feature type="compositionally biased region" description="Polar residues" evidence="5">
    <location>
        <begin position="405"/>
        <end position="418"/>
    </location>
</feature>
<feature type="compositionally biased region" description="Polar residues" evidence="5">
    <location>
        <begin position="579"/>
        <end position="589"/>
    </location>
</feature>
<feature type="compositionally biased region" description="Low complexity" evidence="5">
    <location>
        <begin position="1620"/>
        <end position="1634"/>
    </location>
</feature>
<feature type="compositionally biased region" description="Basic and acidic residues" evidence="5">
    <location>
        <begin position="1641"/>
        <end position="1659"/>
    </location>
</feature>
<feature type="modified residue" description="Asymmetric dimethylarginine" evidence="1">
    <location>
        <position position="494"/>
    </location>
</feature>
<feature type="modified residue" description="Phosphoserine" evidence="3">
    <location>
        <position position="1520"/>
    </location>
</feature>
<proteinExistence type="inferred from homology"/>
<keyword id="KW-0040">ANK repeat</keyword>
<keyword id="KW-0966">Cell projection</keyword>
<keyword id="KW-0175">Coiled coil</keyword>
<keyword id="KW-0963">Cytoplasm</keyword>
<keyword id="KW-0488">Methylation</keyword>
<keyword id="KW-0597">Phosphoprotein</keyword>
<keyword id="KW-1185">Reference proteome</keyword>
<keyword id="KW-0677">Repeat</keyword>
<keyword id="KW-0770">Synapse</keyword>
<accession>Q09YG9</accession>
<dbReference type="EMBL" id="DP000180">
    <property type="protein sequence ID" value="ABI75311.1"/>
    <property type="molecule type" value="Genomic_DNA"/>
</dbReference>
<dbReference type="RefSeq" id="XP_003921100.1">
    <property type="nucleotide sequence ID" value="XM_003921051.2"/>
</dbReference>
<dbReference type="SMR" id="Q09YG9"/>
<dbReference type="STRING" id="39432.ENSSBOP00000032993"/>
<dbReference type="Ensembl" id="ENSSBOT00000049894.1">
    <property type="protein sequence ID" value="ENSSBOP00000032986.1"/>
    <property type="gene ID" value="ENSSBOG00000032674.1"/>
</dbReference>
<dbReference type="GeneID" id="101036139"/>
<dbReference type="KEGG" id="sbq:101036139"/>
<dbReference type="CTD" id="83992"/>
<dbReference type="GeneTree" id="ENSGT00940000158293"/>
<dbReference type="OMA" id="MCPVEAL"/>
<dbReference type="Proteomes" id="UP000233220">
    <property type="component" value="Unplaced"/>
</dbReference>
<dbReference type="GO" id="GO:0015629">
    <property type="term" value="C:actin cytoskeleton"/>
    <property type="evidence" value="ECO:0007669"/>
    <property type="project" value="TreeGrafter"/>
</dbReference>
<dbReference type="GO" id="GO:0005938">
    <property type="term" value="C:cell cortex"/>
    <property type="evidence" value="ECO:0007669"/>
    <property type="project" value="UniProtKB-SubCell"/>
</dbReference>
<dbReference type="GO" id="GO:0043197">
    <property type="term" value="C:dendritic spine"/>
    <property type="evidence" value="ECO:0000250"/>
    <property type="project" value="UniProtKB"/>
</dbReference>
<dbReference type="GO" id="GO:0090443">
    <property type="term" value="C:FAR/SIN/STRIPAK complex"/>
    <property type="evidence" value="ECO:0000250"/>
    <property type="project" value="UniProtKB"/>
</dbReference>
<dbReference type="GO" id="GO:0051721">
    <property type="term" value="F:protein phosphatase 2A binding"/>
    <property type="evidence" value="ECO:0007669"/>
    <property type="project" value="TreeGrafter"/>
</dbReference>
<dbReference type="CDD" id="cd14686">
    <property type="entry name" value="bZIP"/>
    <property type="match status" value="1"/>
</dbReference>
<dbReference type="Gene3D" id="1.25.40.20">
    <property type="entry name" value="Ankyrin repeat-containing domain"/>
    <property type="match status" value="1"/>
</dbReference>
<dbReference type="InterPro" id="IPR002110">
    <property type="entry name" value="Ankyrin_rpt"/>
</dbReference>
<dbReference type="InterPro" id="IPR036770">
    <property type="entry name" value="Ankyrin_rpt-contain_sf"/>
</dbReference>
<dbReference type="InterPro" id="IPR050719">
    <property type="entry name" value="Cortactin-Actin_Reg"/>
</dbReference>
<dbReference type="InterPro" id="IPR019131">
    <property type="entry name" value="Cortactin-binding_p2_N"/>
</dbReference>
<dbReference type="PANTHER" id="PTHR23166:SF9">
    <property type="entry name" value="CTTNBP2 N-TERMINAL-LIKE PROTEIN"/>
    <property type="match status" value="1"/>
</dbReference>
<dbReference type="PANTHER" id="PTHR23166">
    <property type="entry name" value="FILAMIN/GPBP-INTERACTING PROTEIN"/>
    <property type="match status" value="1"/>
</dbReference>
<dbReference type="Pfam" id="PF25408">
    <property type="entry name" value="AAA_lid_NAV1"/>
    <property type="match status" value="1"/>
</dbReference>
<dbReference type="Pfam" id="PF12796">
    <property type="entry name" value="Ank_2"/>
    <property type="match status" value="2"/>
</dbReference>
<dbReference type="Pfam" id="PF09727">
    <property type="entry name" value="CortBP2"/>
    <property type="match status" value="1"/>
</dbReference>
<dbReference type="SMART" id="SM00248">
    <property type="entry name" value="ANK"/>
    <property type="match status" value="6"/>
</dbReference>
<dbReference type="SUPFAM" id="SSF48403">
    <property type="entry name" value="Ankyrin repeat"/>
    <property type="match status" value="1"/>
</dbReference>
<dbReference type="PROSITE" id="PS50297">
    <property type="entry name" value="ANK_REP_REGION"/>
    <property type="match status" value="1"/>
</dbReference>
<dbReference type="PROSITE" id="PS50088">
    <property type="entry name" value="ANK_REPEAT"/>
    <property type="match status" value="4"/>
</dbReference>
<protein>
    <recommendedName>
        <fullName>Cortactin-binding protein 2</fullName>
        <shortName>CortBP2</shortName>
    </recommendedName>
</protein>